<sequence>MSATALFTRRSVSTSNPELRPIPGPKPLPLLGNLFDFDFDNLTKSLGELGKIHGPIYSITFGASTEIMVTSREIAQELCDETRFCKLPGGALDVMKAVVGDGLFTAETSNPKWAIAHRIITPLFGAMRIRGMFDDMKDICEQMCLRWARFGPDEPLNVCDNMTKLTLDTIALCTIDYRFNSFYRENGAAHPFAEAVVDVMTESFDQSNLPDFVNNYVRFRAMAKFKRQAAELRRQTEELIAARRQNPVDRDDLLNAMLSAKDPKTGEGLSPESIVDNLLTFLIAGHETTSSLLSFCFYYLLENPHVLRRVQQEVDTVVGSDTITVDHLSSMPYLEAVLRETLRLRDPGPGFYVKPLKDEVVAGKYAVNKDQPLFIVFDSVHRDQSTYGADADEFRPERMLKDGFDKLPPCAWKPFGNGVRACVGRPFAMQQAILAVAMVLHKFDLVKDESYTLKYHVTMTVRPVGFTMKVRLRQGQRATDLAMGLHRGHSQEASAAASPSRASLKRLSSDVNGDDTDHKSQIAVLYASNSGSCEALAYRLAAEATERGFGIRAVDVVNNAIDRIPVGSPVILITASYNGEPADDAQEFVPWLKSLESGRLNGVKFAVFGNGHRDWANTLFAVPRLIDSELARCGAERVSLMGVSDTCDSSDPFSDFERWIDEKLFPELETPHGPGGVKNGDRAVPRQELQVSLGQPPRITMRKGYVRAIVTEARSLSSPGVPEKRHLELLLPKDFNYKAGDHVYILPRNSPRDVVRALSYFGLGEDTLITIRNTARKLSLGLPLDTPITATDLLGAYVELGRTASLKNLWTLVDAAGHGSRAALLSLTEPERFRAEVQDRHVSILDLLERFPDIDLSLSCFLPMLAQIRPRAYSFSSAPDWKPGHATLTYTVVDFATPATQGINGSSKSKAVGDGTAVVQRQGLASSYLSSLGPGTSLYVSLHRASPYFCLQKSTSLPVIMVGAGTGLAPFRAFLQERRMAAEGAKQRFGPALLFFGCRGPRLDSLYSVELEAYETIGLVQVRRAYSRDPSAQDAQGCKYVTDRLGKCRDEVARLWMDGAQVLVCGGKKMANDVLEVLGPMLLEIDQKRGETTAKTVVEWRARLDKSRYVEEVYV</sequence>
<organism>
    <name type="scientific">Gibberella moniliformis (strain M3125 / FGSC 7600)</name>
    <name type="common">Maize ear and stalk rot fungus</name>
    <name type="synonym">Fusarium verticillioides</name>
    <dbReference type="NCBI Taxonomy" id="334819"/>
    <lineage>
        <taxon>Eukaryota</taxon>
        <taxon>Fungi</taxon>
        <taxon>Dikarya</taxon>
        <taxon>Ascomycota</taxon>
        <taxon>Pezizomycotina</taxon>
        <taxon>Sordariomycetes</taxon>
        <taxon>Hypocreomycetidae</taxon>
        <taxon>Hypocreales</taxon>
        <taxon>Nectriaceae</taxon>
        <taxon>Fusarium</taxon>
        <taxon>Fusarium fujikuroi species complex</taxon>
    </lineage>
</organism>
<proteinExistence type="evidence at transcript level"/>
<gene>
    <name evidence="10" type="primary">FUM6</name>
    <name type="ORF">FVEG_00317</name>
</gene>
<feature type="chain" id="PRO_0000441144" description="Bifunctional cytochrome P450/NADPH--P450 reductase">
    <location>
        <begin position="1"/>
        <end position="1115"/>
    </location>
</feature>
<feature type="domain" description="Flavodoxin-like" evidence="5">
    <location>
        <begin position="522"/>
        <end position="664"/>
    </location>
</feature>
<feature type="domain" description="FAD-binding FR-type" evidence="6">
    <location>
        <begin position="703"/>
        <end position="952"/>
    </location>
</feature>
<feature type="region of interest" description="Disordered" evidence="7">
    <location>
        <begin position="1"/>
        <end position="24"/>
    </location>
</feature>
<feature type="region of interest" description="Cytochrome P450" evidence="3">
    <location>
        <begin position="16"/>
        <end position="494"/>
    </location>
</feature>
<feature type="region of interest" description="Disordered" evidence="7">
    <location>
        <begin position="488"/>
        <end position="515"/>
    </location>
</feature>
<feature type="region of interest" description="NADPH-P-450 reductase" evidence="3">
    <location>
        <begin position="495"/>
        <end position="1115"/>
    </location>
</feature>
<feature type="coiled-coil region" evidence="4">
    <location>
        <begin position="219"/>
        <end position="246"/>
    </location>
</feature>
<feature type="compositionally biased region" description="Polar residues" evidence="7">
    <location>
        <begin position="1"/>
        <end position="16"/>
    </location>
</feature>
<feature type="compositionally biased region" description="Low complexity" evidence="7">
    <location>
        <begin position="493"/>
        <end position="506"/>
    </location>
</feature>
<feature type="binding site" description="axial binding residue" evidence="1">
    <location>
        <position position="422"/>
    </location>
    <ligand>
        <name>heme</name>
        <dbReference type="ChEBI" id="CHEBI:30413"/>
    </ligand>
    <ligandPart>
        <name>Fe</name>
        <dbReference type="ChEBI" id="CHEBI:18248"/>
    </ligandPart>
</feature>
<feature type="binding site" evidence="2">
    <location>
        <position position="618"/>
    </location>
    <ligand>
        <name>FMN</name>
        <dbReference type="ChEBI" id="CHEBI:58210"/>
    </ligand>
</feature>
<feature type="site" description="Important for catalytic activity" evidence="2">
    <location>
        <position position="288"/>
    </location>
</feature>
<evidence type="ECO:0000250" key="1">
    <source>
        <dbReference type="UniProtKB" id="P04798"/>
    </source>
</evidence>
<evidence type="ECO:0000250" key="2">
    <source>
        <dbReference type="UniProtKB" id="P14779"/>
    </source>
</evidence>
<evidence type="ECO:0000250" key="3">
    <source>
        <dbReference type="UniProtKB" id="Q9Y8G7"/>
    </source>
</evidence>
<evidence type="ECO:0000255" key="4"/>
<evidence type="ECO:0000255" key="5">
    <source>
        <dbReference type="PROSITE-ProRule" id="PRU00088"/>
    </source>
</evidence>
<evidence type="ECO:0000255" key="6">
    <source>
        <dbReference type="PROSITE-ProRule" id="PRU00716"/>
    </source>
</evidence>
<evidence type="ECO:0000256" key="7">
    <source>
        <dbReference type="SAM" id="MobiDB-lite"/>
    </source>
</evidence>
<evidence type="ECO:0000269" key="8">
    <source>
    </source>
</evidence>
<evidence type="ECO:0000269" key="9">
    <source>
    </source>
</evidence>
<evidence type="ECO:0000303" key="10">
    <source>
    </source>
</evidence>
<evidence type="ECO:0000305" key="11"/>
<evidence type="ECO:0000305" key="12">
    <source>
    </source>
</evidence>
<comment type="function">
    <text evidence="8 9 12">Bifunctional cytochrome P450/NADPH--P450 reductase; part of the gene cluster that mediates the biosynthesis of fumonisins B1 (FB1), B2 (FB2), B3 (FB3), and B4 (FB4), which are carcinogenic mycotoxins (PubMed:11728154, PubMed:15137825). Within the pathway, FUM6 is responsible for the oxidation of the C-14 and/or C-15 positions (PubMed:15137825). The biosynthesis starts with the FUM1-catalyzed carbon chain assembly from one molecule of acetyl-CoA, eight molecules of malonyl-CoA, and two molecules of methionine (in S-adenosyl form). The C18 polyketide chain is released from the enzyme by a nucleophilic attack of a carbanion, which is derived from R-carbon of alanine by decarboxylation, on the carbonyl carbon of polyketide acyl chain. This step is catalyzed by the pyridoxal 5'-phosphate-dependent aminoacyl transferase FUM8. The resultant 3-keto intermediate is then stereospecifically reduced to a 3-hydroxyl product by reductase FUM13. Subsequent oxidations at C-10 by the cytochrome P450 monooxygenase FUM2, C-14 and C-15 by FUM6, FUM12 or FUM15, tricarballylic esterification of the hydroxyl groups on C-14 and C-15 by acyltransferase FUM14, and C-5 hydroxylation by 2-keto-glutarate-dependent dioxygenase FUM3 furnish the biosynthesis of fumonisins. The tricarballylic moieties are most likely derived from the citric acid cycle, and their addition to the carbon backbone may involve FUM7, FUM10, FUM11 and FUM14 (Probable).</text>
</comment>
<comment type="catalytic activity">
    <reaction evidence="3">
        <text>an organic molecule + reduced [NADPH--hemoprotein reductase] + O2 = an alcohol + oxidized [NADPH--hemoprotein reductase] + H2O + H(+)</text>
        <dbReference type="Rhea" id="RHEA:17149"/>
        <dbReference type="Rhea" id="RHEA-COMP:11964"/>
        <dbReference type="Rhea" id="RHEA-COMP:11965"/>
        <dbReference type="ChEBI" id="CHEBI:15377"/>
        <dbReference type="ChEBI" id="CHEBI:15378"/>
        <dbReference type="ChEBI" id="CHEBI:15379"/>
        <dbReference type="ChEBI" id="CHEBI:30879"/>
        <dbReference type="ChEBI" id="CHEBI:57618"/>
        <dbReference type="ChEBI" id="CHEBI:58210"/>
        <dbReference type="ChEBI" id="CHEBI:142491"/>
        <dbReference type="EC" id="1.14.14.1"/>
    </reaction>
</comment>
<comment type="catalytic activity">
    <reaction evidence="3">
        <text>2 oxidized [cytochrome P450] + NADPH = 2 reduced [cytochrome P450] + NADP(+) + H(+)</text>
        <dbReference type="Rhea" id="RHEA:24040"/>
        <dbReference type="Rhea" id="RHEA-COMP:14627"/>
        <dbReference type="Rhea" id="RHEA-COMP:14628"/>
        <dbReference type="ChEBI" id="CHEBI:15378"/>
        <dbReference type="ChEBI" id="CHEBI:55376"/>
        <dbReference type="ChEBI" id="CHEBI:57783"/>
        <dbReference type="ChEBI" id="CHEBI:58349"/>
        <dbReference type="ChEBI" id="CHEBI:60344"/>
        <dbReference type="EC" id="1.6.2.4"/>
    </reaction>
</comment>
<comment type="cofactor">
    <cofactor evidence="3">
        <name>FAD</name>
        <dbReference type="ChEBI" id="CHEBI:57692"/>
    </cofactor>
    <text evidence="3">Binds 1 FAD.</text>
</comment>
<comment type="cofactor">
    <cofactor evidence="3">
        <name>FMN</name>
        <dbReference type="ChEBI" id="CHEBI:58210"/>
    </cofactor>
    <text evidence="3">Binds 1 FMN.</text>
</comment>
<comment type="cofactor">
    <cofactor evidence="1">
        <name>heme</name>
        <dbReference type="ChEBI" id="CHEBI:30413"/>
    </cofactor>
</comment>
<comment type="pathway">
    <text evidence="8 9">Mycotoxin biosynthesis.</text>
</comment>
<comment type="induction">
    <text evidence="8">Expression correlates with fuminisins production (PubMed:11728154).</text>
</comment>
<comment type="disruption phenotype">
    <text evidence="8 9">Impairs the production of fumonisins (PubMed:11728154, PubMed:15137825).</text>
</comment>
<comment type="similarity">
    <text evidence="11">In the N-terminal section; belongs to the cytochrome P450 family.</text>
</comment>
<comment type="sequence caution" evidence="11">
    <conflict type="erroneous initiation">
        <sequence resource="EMBL-CDS" id="EWG36196"/>
    </conflict>
    <text>Truncated N-terminus.</text>
</comment>
<dbReference type="EC" id="1.14.14.1" evidence="3"/>
<dbReference type="EC" id="1.6.2.4" evidence="3"/>
<dbReference type="EMBL" id="AF155773">
    <property type="protein sequence ID" value="AAG27132.1"/>
    <property type="molecule type" value="Genomic_DNA"/>
</dbReference>
<dbReference type="EMBL" id="CM000578">
    <property type="protein sequence ID" value="EWG36196.1"/>
    <property type="status" value="ALT_SEQ"/>
    <property type="molecule type" value="Genomic_DNA"/>
</dbReference>
<dbReference type="RefSeq" id="XP_018742387.1">
    <property type="nucleotide sequence ID" value="XM_018886755.1"/>
</dbReference>
<dbReference type="SMR" id="Q9HGE0"/>
<dbReference type="STRING" id="334819.Q9HGE0"/>
<dbReference type="EnsemblFungi" id="FVEG_00317T0">
    <property type="protein sequence ID" value="FVEG_00317T0"/>
    <property type="gene ID" value="FVEG_00317"/>
</dbReference>
<dbReference type="GeneID" id="30058695"/>
<dbReference type="KEGG" id="fvr:FVEG_00317"/>
<dbReference type="eggNOG" id="KOG0157">
    <property type="taxonomic scope" value="Eukaryota"/>
</dbReference>
<dbReference type="eggNOG" id="KOG1158">
    <property type="taxonomic scope" value="Eukaryota"/>
</dbReference>
<dbReference type="OMA" id="ASYNGEP"/>
<dbReference type="OrthoDB" id="64690at110618"/>
<dbReference type="Proteomes" id="UP000009096">
    <property type="component" value="Chromosome 1"/>
</dbReference>
<dbReference type="GO" id="GO:0005829">
    <property type="term" value="C:cytosol"/>
    <property type="evidence" value="ECO:0007669"/>
    <property type="project" value="TreeGrafter"/>
</dbReference>
<dbReference type="GO" id="GO:0070330">
    <property type="term" value="F:aromatase activity"/>
    <property type="evidence" value="ECO:0007669"/>
    <property type="project" value="InterPro"/>
</dbReference>
<dbReference type="GO" id="GO:0050660">
    <property type="term" value="F:flavin adenine dinucleotide binding"/>
    <property type="evidence" value="ECO:0007669"/>
    <property type="project" value="TreeGrafter"/>
</dbReference>
<dbReference type="GO" id="GO:0010181">
    <property type="term" value="F:FMN binding"/>
    <property type="evidence" value="ECO:0007669"/>
    <property type="project" value="InterPro"/>
</dbReference>
<dbReference type="GO" id="GO:0020037">
    <property type="term" value="F:heme binding"/>
    <property type="evidence" value="ECO:0007669"/>
    <property type="project" value="InterPro"/>
</dbReference>
<dbReference type="GO" id="GO:0005506">
    <property type="term" value="F:iron ion binding"/>
    <property type="evidence" value="ECO:0007669"/>
    <property type="project" value="InterPro"/>
</dbReference>
<dbReference type="GO" id="GO:0003958">
    <property type="term" value="F:NADPH-hemoprotein reductase activity"/>
    <property type="evidence" value="ECO:0007669"/>
    <property type="project" value="UniProtKB-EC"/>
</dbReference>
<dbReference type="GO" id="GO:1900541">
    <property type="term" value="P:fumonisin biosynthetic process"/>
    <property type="evidence" value="ECO:0000315"/>
    <property type="project" value="GO_Central"/>
</dbReference>
<dbReference type="CDD" id="cd06206">
    <property type="entry name" value="bifunctional_CYPOR"/>
    <property type="match status" value="1"/>
</dbReference>
<dbReference type="CDD" id="cd11068">
    <property type="entry name" value="CYP120A1"/>
    <property type="match status" value="1"/>
</dbReference>
<dbReference type="FunFam" id="1.10.630.10:FF:000040">
    <property type="entry name" value="Bifunctional cytochrome P450/NADPH--P450 reductase"/>
    <property type="match status" value="1"/>
</dbReference>
<dbReference type="Gene3D" id="3.40.50.360">
    <property type="match status" value="1"/>
</dbReference>
<dbReference type="Gene3D" id="1.10.630.10">
    <property type="entry name" value="Cytochrome P450"/>
    <property type="match status" value="1"/>
</dbReference>
<dbReference type="Gene3D" id="1.20.990.10">
    <property type="entry name" value="NADPH-cytochrome p450 Reductase, Chain A, domain 3"/>
    <property type="match status" value="1"/>
</dbReference>
<dbReference type="Gene3D" id="3.40.50.80">
    <property type="entry name" value="Nucleotide-binding domain of ferredoxin-NADP reductase (FNR) module"/>
    <property type="match status" value="1"/>
</dbReference>
<dbReference type="Gene3D" id="2.40.30.10">
    <property type="entry name" value="Translation factors"/>
    <property type="match status" value="1"/>
</dbReference>
<dbReference type="InterPro" id="IPR023206">
    <property type="entry name" value="Bifunctional_P450_P450_red"/>
</dbReference>
<dbReference type="InterPro" id="IPR003097">
    <property type="entry name" value="CysJ-like_FAD-binding"/>
</dbReference>
<dbReference type="InterPro" id="IPR001128">
    <property type="entry name" value="Cyt_P450"/>
</dbReference>
<dbReference type="InterPro" id="IPR017972">
    <property type="entry name" value="Cyt_P450_CS"/>
</dbReference>
<dbReference type="InterPro" id="IPR002401">
    <property type="entry name" value="Cyt_P450_E_grp-I"/>
</dbReference>
<dbReference type="InterPro" id="IPR036396">
    <property type="entry name" value="Cyt_P450_sf"/>
</dbReference>
<dbReference type="InterPro" id="IPR017927">
    <property type="entry name" value="FAD-bd_FR_type"/>
</dbReference>
<dbReference type="InterPro" id="IPR008254">
    <property type="entry name" value="Flavodoxin/NO_synth"/>
</dbReference>
<dbReference type="InterPro" id="IPR029039">
    <property type="entry name" value="Flavoprotein-like_sf"/>
</dbReference>
<dbReference type="InterPro" id="IPR039261">
    <property type="entry name" value="FNR_nucleotide-bd"/>
</dbReference>
<dbReference type="InterPro" id="IPR023173">
    <property type="entry name" value="NADPH_Cyt_P450_Rdtase_alpha"/>
</dbReference>
<dbReference type="InterPro" id="IPR001433">
    <property type="entry name" value="OxRdtase_FAD/NAD-bd"/>
</dbReference>
<dbReference type="InterPro" id="IPR017938">
    <property type="entry name" value="Riboflavin_synthase-like_b-brl"/>
</dbReference>
<dbReference type="PANTHER" id="PTHR19384:SF127">
    <property type="entry name" value="BIFUNCTIONAL CYTOCHROME P450_NADPH--P450 REDUCTASE"/>
    <property type="match status" value="1"/>
</dbReference>
<dbReference type="PANTHER" id="PTHR19384">
    <property type="entry name" value="NITRIC OXIDE SYNTHASE-RELATED"/>
    <property type="match status" value="1"/>
</dbReference>
<dbReference type="Pfam" id="PF00667">
    <property type="entry name" value="FAD_binding_1"/>
    <property type="match status" value="1"/>
</dbReference>
<dbReference type="Pfam" id="PF00258">
    <property type="entry name" value="Flavodoxin_1"/>
    <property type="match status" value="1"/>
</dbReference>
<dbReference type="Pfam" id="PF00175">
    <property type="entry name" value="NAD_binding_1"/>
    <property type="match status" value="1"/>
</dbReference>
<dbReference type="Pfam" id="PF00067">
    <property type="entry name" value="p450"/>
    <property type="match status" value="1"/>
</dbReference>
<dbReference type="PIRSF" id="PIRSF000209">
    <property type="entry name" value="Bifunctional_P450_P450R"/>
    <property type="match status" value="1"/>
</dbReference>
<dbReference type="PRINTS" id="PR00463">
    <property type="entry name" value="EP450I"/>
</dbReference>
<dbReference type="PRINTS" id="PR00385">
    <property type="entry name" value="P450"/>
</dbReference>
<dbReference type="SUPFAM" id="SSF48264">
    <property type="entry name" value="Cytochrome P450"/>
    <property type="match status" value="1"/>
</dbReference>
<dbReference type="SUPFAM" id="SSF52343">
    <property type="entry name" value="Ferredoxin reductase-like, C-terminal NADP-linked domain"/>
    <property type="match status" value="1"/>
</dbReference>
<dbReference type="SUPFAM" id="SSF52218">
    <property type="entry name" value="Flavoproteins"/>
    <property type="match status" value="1"/>
</dbReference>
<dbReference type="SUPFAM" id="SSF63380">
    <property type="entry name" value="Riboflavin synthase domain-like"/>
    <property type="match status" value="1"/>
</dbReference>
<dbReference type="PROSITE" id="PS00086">
    <property type="entry name" value="CYTOCHROME_P450"/>
    <property type="match status" value="1"/>
</dbReference>
<dbReference type="PROSITE" id="PS51384">
    <property type="entry name" value="FAD_FR"/>
    <property type="match status" value="1"/>
</dbReference>
<dbReference type="PROSITE" id="PS50902">
    <property type="entry name" value="FLAVODOXIN_LIKE"/>
    <property type="match status" value="1"/>
</dbReference>
<name>FUM6_GIBM7</name>
<accession>Q9HGE0</accession>
<accession>W7LC82</accession>
<keyword id="KW-0175">Coiled coil</keyword>
<keyword id="KW-0249">Electron transport</keyword>
<keyword id="KW-0274">FAD</keyword>
<keyword id="KW-0285">Flavoprotein</keyword>
<keyword id="KW-0288">FMN</keyword>
<keyword id="KW-0349">Heme</keyword>
<keyword id="KW-0408">Iron</keyword>
<keyword id="KW-0479">Metal-binding</keyword>
<keyword id="KW-0503">Monooxygenase</keyword>
<keyword id="KW-0511">Multifunctional enzyme</keyword>
<keyword id="KW-0521">NADP</keyword>
<keyword id="KW-0560">Oxidoreductase</keyword>
<keyword id="KW-1185">Reference proteome</keyword>
<keyword id="KW-0813">Transport</keyword>
<protein>
    <recommendedName>
        <fullName evidence="10">Bifunctional cytochrome P450/NADPH--P450 reductase</fullName>
    </recommendedName>
    <alternativeName>
        <fullName evidence="10">Fumonisin biosynthesis cluster protein 6</fullName>
    </alternativeName>
    <domain>
        <recommendedName>
            <fullName evidence="3">Cytochrome P450 monooxygenase</fullName>
            <ecNumber evidence="3">1.14.14.1</ecNumber>
        </recommendedName>
    </domain>
    <domain>
        <recommendedName>
            <fullName evidence="3">NADPH--cytochrome P450 reductase</fullName>
            <ecNumber evidence="3">1.6.2.4</ecNumber>
        </recommendedName>
    </domain>
</protein>
<reference key="1">
    <citation type="journal article" date="2001" name="Fungal Genet. Biol.">
        <title>Characterization of four clustered and coregulated genes associated with fumonisin biosynthesis in Fusarium verticillioides.</title>
        <authorList>
            <person name="Seo J.A."/>
            <person name="Proctor R.H."/>
            <person name="Plattner R.D."/>
        </authorList>
    </citation>
    <scope>NUCLEOTIDE SEQUENCE [GENOMIC DNA]</scope>
    <scope>INDUCTION</scope>
    <scope>DISRUPTION PHENOTYPE</scope>
    <scope>PATHWAY</scope>
    <source>
        <strain>M3125 / FGSC 7600</strain>
    </source>
</reference>
<reference key="2">
    <citation type="journal article" date="2003" name="Fungal Genet. Biol.">
        <title>Co-expression of 15 contiguous genes delineates a fumonisin biosynthetic gene cluster in Gibberella moniliformis.</title>
        <authorList>
            <person name="Proctor R.H."/>
            <person name="Brown D.W."/>
            <person name="Plattner R.D."/>
            <person name="Desjardins A.E."/>
        </authorList>
    </citation>
    <scope>NUCLEOTIDE SEQUENCE [GENOMIC DNA]</scope>
    <source>
        <strain>M3125 / FGSC 7600</strain>
    </source>
</reference>
<reference key="3">
    <citation type="journal article" date="2010" name="Nature">
        <title>Comparative genomics reveals mobile pathogenicity chromosomes in Fusarium.</title>
        <authorList>
            <person name="Ma L.-J."/>
            <person name="van der Does H.C."/>
            <person name="Borkovich K.A."/>
            <person name="Coleman J.J."/>
            <person name="Daboussi M.-J."/>
            <person name="Di Pietro A."/>
            <person name="Dufresne M."/>
            <person name="Freitag M."/>
            <person name="Grabherr M."/>
            <person name="Henrissat B."/>
            <person name="Houterman P.M."/>
            <person name="Kang S."/>
            <person name="Shim W.-B."/>
            <person name="Woloshuk C."/>
            <person name="Xie X."/>
            <person name="Xu J.-R."/>
            <person name="Antoniw J."/>
            <person name="Baker S.E."/>
            <person name="Bluhm B.H."/>
            <person name="Breakspear A."/>
            <person name="Brown D.W."/>
            <person name="Butchko R.A.E."/>
            <person name="Chapman S."/>
            <person name="Coulson R."/>
            <person name="Coutinho P.M."/>
            <person name="Danchin E.G.J."/>
            <person name="Diener A."/>
            <person name="Gale L.R."/>
            <person name="Gardiner D.M."/>
            <person name="Goff S."/>
            <person name="Hammond-Kosack K.E."/>
            <person name="Hilburn K."/>
            <person name="Hua-Van A."/>
            <person name="Jonkers W."/>
            <person name="Kazan K."/>
            <person name="Kodira C.D."/>
            <person name="Koehrsen M."/>
            <person name="Kumar L."/>
            <person name="Lee Y.-H."/>
            <person name="Li L."/>
            <person name="Manners J.M."/>
            <person name="Miranda-Saavedra D."/>
            <person name="Mukherjee M."/>
            <person name="Park G."/>
            <person name="Park J."/>
            <person name="Park S.-Y."/>
            <person name="Proctor R.H."/>
            <person name="Regev A."/>
            <person name="Ruiz-Roldan M.C."/>
            <person name="Sain D."/>
            <person name="Sakthikumar S."/>
            <person name="Sykes S."/>
            <person name="Schwartz D.C."/>
            <person name="Turgeon B.G."/>
            <person name="Wapinski I."/>
            <person name="Yoder O."/>
            <person name="Young S."/>
            <person name="Zeng Q."/>
            <person name="Zhou S."/>
            <person name="Galagan J."/>
            <person name="Cuomo C.A."/>
            <person name="Kistler H.C."/>
            <person name="Rep M."/>
        </authorList>
    </citation>
    <scope>NUCLEOTIDE SEQUENCE [LARGE SCALE GENOMIC DNA]</scope>
    <source>
        <strain>M3125 / FGSC 7600</strain>
    </source>
</reference>
<reference key="4">
    <citation type="journal article" date="2004" name="J. Agric. Food Chem.">
        <title>Determining the biosynthetic sequence in the early steps of the fumonisin pathway by use of three gene-disruption mutants of Fusarium verticillioides.</title>
        <authorList>
            <person name="Bojja R.S."/>
            <person name="Cerny R.L."/>
            <person name="Proctor R.H."/>
            <person name="Du L."/>
        </authorList>
    </citation>
    <scope>FUNCTION</scope>
    <scope>DISRUPTION PHENOTYPE</scope>
    <scope>PATHWAY</scope>
</reference>